<gene>
    <name evidence="1" type="primary">atpG</name>
    <name type="ordered locus">CT2032</name>
</gene>
<accession>Q8KAW9</accession>
<name>ATPG_CHLTE</name>
<reference key="1">
    <citation type="journal article" date="2002" name="Proc. Natl. Acad. Sci. U.S.A.">
        <title>The complete genome sequence of Chlorobium tepidum TLS, a photosynthetic, anaerobic, green-sulfur bacterium.</title>
        <authorList>
            <person name="Eisen J.A."/>
            <person name="Nelson K.E."/>
            <person name="Paulsen I.T."/>
            <person name="Heidelberg J.F."/>
            <person name="Wu M."/>
            <person name="Dodson R.J."/>
            <person name="DeBoy R.T."/>
            <person name="Gwinn M.L."/>
            <person name="Nelson W.C."/>
            <person name="Haft D.H."/>
            <person name="Hickey E.K."/>
            <person name="Peterson J.D."/>
            <person name="Durkin A.S."/>
            <person name="Kolonay J.F."/>
            <person name="Yang F."/>
            <person name="Holt I.E."/>
            <person name="Umayam L.A."/>
            <person name="Mason T.M."/>
            <person name="Brenner M."/>
            <person name="Shea T.P."/>
            <person name="Parksey D.S."/>
            <person name="Nierman W.C."/>
            <person name="Feldblyum T.V."/>
            <person name="Hansen C.L."/>
            <person name="Craven M.B."/>
            <person name="Radune D."/>
            <person name="Vamathevan J.J."/>
            <person name="Khouri H.M."/>
            <person name="White O."/>
            <person name="Gruber T.M."/>
            <person name="Ketchum K.A."/>
            <person name="Venter J.C."/>
            <person name="Tettelin H."/>
            <person name="Bryant D.A."/>
            <person name="Fraser C.M."/>
        </authorList>
    </citation>
    <scope>NUCLEOTIDE SEQUENCE [LARGE SCALE GENOMIC DNA]</scope>
    <source>
        <strain>ATCC 49652 / DSM 12025 / NBRC 103806 / TLS</strain>
    </source>
</reference>
<sequence length="292" mass="32053">MPTLKDIRIRLKGVKSTQQVTKAMKMVAAAKLRRAQDRAIQARPYAGKLKEMLASLSTKVDTSVNPLLSPREEVNNVLVILVTSDRGLCGGFNANIIKMAQRLIHEEYAALHAKGGVTMICAGTKGTEFFRKRGYKLAAAYPGVFQNLSFDSAREIADKASKMYLSGEVDRVVLVYNEFKSVLAPNLRTEQLLPITPEGGDAKTASSEYLYEPSPAAIIDELVPKHLNTQLWRVMLESNAAEQAARMAAMDSATENAKELIRVLNISYNRARQAAITKELSEIVAGADALKQ</sequence>
<protein>
    <recommendedName>
        <fullName evidence="1">ATP synthase gamma chain</fullName>
    </recommendedName>
    <alternativeName>
        <fullName evidence="1">ATP synthase F1 sector gamma subunit</fullName>
    </alternativeName>
    <alternativeName>
        <fullName evidence="1">F-ATPase gamma subunit</fullName>
    </alternativeName>
</protein>
<comment type="function">
    <text evidence="1">Produces ATP from ADP in the presence of a proton gradient across the membrane. The gamma chain is believed to be important in regulating ATPase activity and the flow of protons through the CF(0) complex.</text>
</comment>
<comment type="subunit">
    <text evidence="1">F-type ATPases have 2 components, CF(1) - the catalytic core - and CF(0) - the membrane proton channel. CF(1) has five subunits: alpha(3), beta(3), gamma(1), delta(1), epsilon(1). CF(0) has three main subunits: a, b and c.</text>
</comment>
<comment type="subcellular location">
    <subcellularLocation>
        <location evidence="1">Cell inner membrane</location>
        <topology evidence="1">Peripheral membrane protein</topology>
    </subcellularLocation>
</comment>
<comment type="similarity">
    <text evidence="1">Belongs to the ATPase gamma chain family.</text>
</comment>
<evidence type="ECO:0000255" key="1">
    <source>
        <dbReference type="HAMAP-Rule" id="MF_00815"/>
    </source>
</evidence>
<organism>
    <name type="scientific">Chlorobaculum tepidum (strain ATCC 49652 / DSM 12025 / NBRC 103806 / TLS)</name>
    <name type="common">Chlorobium tepidum</name>
    <dbReference type="NCBI Taxonomy" id="194439"/>
    <lineage>
        <taxon>Bacteria</taxon>
        <taxon>Pseudomonadati</taxon>
        <taxon>Chlorobiota</taxon>
        <taxon>Chlorobiia</taxon>
        <taxon>Chlorobiales</taxon>
        <taxon>Chlorobiaceae</taxon>
        <taxon>Chlorobaculum</taxon>
    </lineage>
</organism>
<feature type="chain" id="PRO_0000073263" description="ATP synthase gamma chain">
    <location>
        <begin position="1"/>
        <end position="292"/>
    </location>
</feature>
<dbReference type="EMBL" id="AE006470">
    <property type="protein sequence ID" value="AAM73249.1"/>
    <property type="molecule type" value="Genomic_DNA"/>
</dbReference>
<dbReference type="RefSeq" id="NP_662907.1">
    <property type="nucleotide sequence ID" value="NC_002932.3"/>
</dbReference>
<dbReference type="RefSeq" id="WP_010933687.1">
    <property type="nucleotide sequence ID" value="NC_002932.3"/>
</dbReference>
<dbReference type="SMR" id="Q8KAW9"/>
<dbReference type="STRING" id="194439.CT2032"/>
<dbReference type="EnsemblBacteria" id="AAM73249">
    <property type="protein sequence ID" value="AAM73249"/>
    <property type="gene ID" value="CT2032"/>
</dbReference>
<dbReference type="KEGG" id="cte:CT2032"/>
<dbReference type="PATRIC" id="fig|194439.7.peg.1840"/>
<dbReference type="eggNOG" id="COG0224">
    <property type="taxonomic scope" value="Bacteria"/>
</dbReference>
<dbReference type="HOGENOM" id="CLU_050669_0_1_10"/>
<dbReference type="OrthoDB" id="9812769at2"/>
<dbReference type="Proteomes" id="UP000001007">
    <property type="component" value="Chromosome"/>
</dbReference>
<dbReference type="GO" id="GO:0005886">
    <property type="term" value="C:plasma membrane"/>
    <property type="evidence" value="ECO:0007669"/>
    <property type="project" value="UniProtKB-SubCell"/>
</dbReference>
<dbReference type="GO" id="GO:0045259">
    <property type="term" value="C:proton-transporting ATP synthase complex"/>
    <property type="evidence" value="ECO:0007669"/>
    <property type="project" value="UniProtKB-KW"/>
</dbReference>
<dbReference type="GO" id="GO:0005524">
    <property type="term" value="F:ATP binding"/>
    <property type="evidence" value="ECO:0007669"/>
    <property type="project" value="UniProtKB-UniRule"/>
</dbReference>
<dbReference type="GO" id="GO:0046933">
    <property type="term" value="F:proton-transporting ATP synthase activity, rotational mechanism"/>
    <property type="evidence" value="ECO:0007669"/>
    <property type="project" value="UniProtKB-UniRule"/>
</dbReference>
<dbReference type="GO" id="GO:0042777">
    <property type="term" value="P:proton motive force-driven plasma membrane ATP synthesis"/>
    <property type="evidence" value="ECO:0007669"/>
    <property type="project" value="UniProtKB-UniRule"/>
</dbReference>
<dbReference type="CDD" id="cd12151">
    <property type="entry name" value="F1-ATPase_gamma"/>
    <property type="match status" value="1"/>
</dbReference>
<dbReference type="Gene3D" id="3.40.1380.10">
    <property type="match status" value="1"/>
</dbReference>
<dbReference type="Gene3D" id="1.10.287.80">
    <property type="entry name" value="ATP synthase, gamma subunit, helix hairpin domain"/>
    <property type="match status" value="2"/>
</dbReference>
<dbReference type="HAMAP" id="MF_00815">
    <property type="entry name" value="ATP_synth_gamma_bact"/>
    <property type="match status" value="1"/>
</dbReference>
<dbReference type="InterPro" id="IPR035968">
    <property type="entry name" value="ATP_synth_F1_ATPase_gsu"/>
</dbReference>
<dbReference type="InterPro" id="IPR000131">
    <property type="entry name" value="ATP_synth_F1_gsu"/>
</dbReference>
<dbReference type="InterPro" id="IPR023632">
    <property type="entry name" value="ATP_synth_F1_gsu_CS"/>
</dbReference>
<dbReference type="NCBIfam" id="TIGR01146">
    <property type="entry name" value="ATPsyn_F1gamma"/>
    <property type="match status" value="1"/>
</dbReference>
<dbReference type="NCBIfam" id="NF009958">
    <property type="entry name" value="PRK13425.1"/>
    <property type="match status" value="1"/>
</dbReference>
<dbReference type="PANTHER" id="PTHR11693">
    <property type="entry name" value="ATP SYNTHASE GAMMA CHAIN"/>
    <property type="match status" value="1"/>
</dbReference>
<dbReference type="PANTHER" id="PTHR11693:SF22">
    <property type="entry name" value="ATP SYNTHASE SUBUNIT GAMMA, MITOCHONDRIAL"/>
    <property type="match status" value="1"/>
</dbReference>
<dbReference type="Pfam" id="PF00231">
    <property type="entry name" value="ATP-synt"/>
    <property type="match status" value="1"/>
</dbReference>
<dbReference type="PRINTS" id="PR00126">
    <property type="entry name" value="ATPASEGAMMA"/>
</dbReference>
<dbReference type="SUPFAM" id="SSF52943">
    <property type="entry name" value="ATP synthase (F1-ATPase), gamma subunit"/>
    <property type="match status" value="1"/>
</dbReference>
<dbReference type="PROSITE" id="PS00153">
    <property type="entry name" value="ATPASE_GAMMA"/>
    <property type="match status" value="1"/>
</dbReference>
<proteinExistence type="inferred from homology"/>
<keyword id="KW-0066">ATP synthesis</keyword>
<keyword id="KW-0997">Cell inner membrane</keyword>
<keyword id="KW-1003">Cell membrane</keyword>
<keyword id="KW-0139">CF(1)</keyword>
<keyword id="KW-0375">Hydrogen ion transport</keyword>
<keyword id="KW-0406">Ion transport</keyword>
<keyword id="KW-0472">Membrane</keyword>
<keyword id="KW-1185">Reference proteome</keyword>
<keyword id="KW-0813">Transport</keyword>